<name>AAPP_RHIJ3</name>
<sequence>MAEAPAKKLTVSATEVAVEIVNMNKWYGDFHVLRDINLKVMRGERIVIAGPSGSGKSTMIRCINRLEEHQKGKIVVDGTELTNDLKKIDEVRREVGMVFQHFNLFPHLTILENCTLAPIWVRKMPKKQAEEVAMHFLKRVKIPEQANKYPGQLSGGQQQRVAIARSLCMNPKIMLFDEPTSALDPEMIKEVLDTMVGLAEEGMTMLCVTHEMGFARQVANRVIFMDQGQIVEQNEPAAFFDNPQHERTKLFLSQILH</sequence>
<keyword id="KW-0029">Amino-acid transport</keyword>
<keyword id="KW-0067">ATP-binding</keyword>
<keyword id="KW-0547">Nucleotide-binding</keyword>
<keyword id="KW-0813">Transport</keyword>
<organism>
    <name type="scientific">Rhizobium johnstonii (strain DSM 114642 / LMG 32736 / 3841)</name>
    <name type="common">Rhizobium leguminosarum bv. viciae</name>
    <dbReference type="NCBI Taxonomy" id="216596"/>
    <lineage>
        <taxon>Bacteria</taxon>
        <taxon>Pseudomonadati</taxon>
        <taxon>Pseudomonadota</taxon>
        <taxon>Alphaproteobacteria</taxon>
        <taxon>Hyphomicrobiales</taxon>
        <taxon>Rhizobiaceae</taxon>
        <taxon>Rhizobium/Agrobacterium group</taxon>
        <taxon>Rhizobium</taxon>
        <taxon>Rhizobium johnstonii</taxon>
    </lineage>
</organism>
<feature type="chain" id="PRO_0000091918" description="General L-amino acid transport ATP-binding protein AapP">
    <location>
        <begin position="1"/>
        <end position="257"/>
    </location>
</feature>
<feature type="domain" description="ABC transporter" evidence="1">
    <location>
        <begin position="18"/>
        <end position="252"/>
    </location>
</feature>
<feature type="binding site" evidence="1">
    <location>
        <begin position="50"/>
        <end position="57"/>
    </location>
    <ligand>
        <name>ATP</name>
        <dbReference type="ChEBI" id="CHEBI:30616"/>
    </ligand>
</feature>
<gene>
    <name type="primary">aapP</name>
    <name type="ordered locus">RL2201</name>
</gene>
<protein>
    <recommendedName>
        <fullName>General L-amino acid transport ATP-binding protein AapP</fullName>
    </recommendedName>
</protein>
<evidence type="ECO:0000255" key="1">
    <source>
        <dbReference type="PROSITE-ProRule" id="PRU00434"/>
    </source>
</evidence>
<evidence type="ECO:0000305" key="2"/>
<comment type="function">
    <text>Part of a binding-protein-dependent transport system for L-amino acids, affects the uptake as well as the efflux of these amino acids. Probably responsible for energy coupling to the transport system.</text>
</comment>
<comment type="similarity">
    <text evidence="2">Belongs to the ABC transporter superfamily.</text>
</comment>
<proteinExistence type="inferred from homology"/>
<dbReference type="EMBL" id="X82596">
    <property type="protein sequence ID" value="CAA57936.1"/>
    <property type="molecule type" value="Genomic_DNA"/>
</dbReference>
<dbReference type="EMBL" id="AM236080">
    <property type="protein sequence ID" value="CAK07693.1"/>
    <property type="molecule type" value="Genomic_DNA"/>
</dbReference>
<dbReference type="RefSeq" id="WP_011651798.1">
    <property type="nucleotide sequence ID" value="NC_008380.1"/>
</dbReference>
<dbReference type="SMR" id="Q52815"/>
<dbReference type="TCDB" id="3.A.1.3.8">
    <property type="family name" value="the atp-binding cassette (abc) superfamily"/>
</dbReference>
<dbReference type="EnsemblBacteria" id="CAK07693">
    <property type="protein sequence ID" value="CAK07693"/>
    <property type="gene ID" value="RL2201"/>
</dbReference>
<dbReference type="KEGG" id="rle:RL2201"/>
<dbReference type="eggNOG" id="COG1126">
    <property type="taxonomic scope" value="Bacteria"/>
</dbReference>
<dbReference type="HOGENOM" id="CLU_000604_1_22_5"/>
<dbReference type="Proteomes" id="UP000006575">
    <property type="component" value="Chromosome"/>
</dbReference>
<dbReference type="GO" id="GO:0015424">
    <property type="term" value="F:ABC-type amino acid transporter activity"/>
    <property type="evidence" value="ECO:0007669"/>
    <property type="project" value="InterPro"/>
</dbReference>
<dbReference type="GO" id="GO:0005524">
    <property type="term" value="F:ATP binding"/>
    <property type="evidence" value="ECO:0007669"/>
    <property type="project" value="UniProtKB-KW"/>
</dbReference>
<dbReference type="GO" id="GO:0016887">
    <property type="term" value="F:ATP hydrolysis activity"/>
    <property type="evidence" value="ECO:0007669"/>
    <property type="project" value="InterPro"/>
</dbReference>
<dbReference type="CDD" id="cd03262">
    <property type="entry name" value="ABC_HisP_GlnQ"/>
    <property type="match status" value="1"/>
</dbReference>
<dbReference type="FunFam" id="3.40.50.300:FF:000020">
    <property type="entry name" value="Amino acid ABC transporter ATP-binding component"/>
    <property type="match status" value="1"/>
</dbReference>
<dbReference type="Gene3D" id="3.40.50.300">
    <property type="entry name" value="P-loop containing nucleotide triphosphate hydrolases"/>
    <property type="match status" value="1"/>
</dbReference>
<dbReference type="InterPro" id="IPR003593">
    <property type="entry name" value="AAA+_ATPase"/>
</dbReference>
<dbReference type="InterPro" id="IPR030679">
    <property type="entry name" value="ABC_ATPase_HisP-typ"/>
</dbReference>
<dbReference type="InterPro" id="IPR003439">
    <property type="entry name" value="ABC_transporter-like_ATP-bd"/>
</dbReference>
<dbReference type="InterPro" id="IPR017871">
    <property type="entry name" value="ABC_transporter-like_CS"/>
</dbReference>
<dbReference type="InterPro" id="IPR050086">
    <property type="entry name" value="MetN_ABC_transporter-like"/>
</dbReference>
<dbReference type="InterPro" id="IPR027417">
    <property type="entry name" value="P-loop_NTPase"/>
</dbReference>
<dbReference type="PANTHER" id="PTHR43166">
    <property type="entry name" value="AMINO ACID IMPORT ATP-BINDING PROTEIN"/>
    <property type="match status" value="1"/>
</dbReference>
<dbReference type="PANTHER" id="PTHR43166:SF4">
    <property type="entry name" value="PHOSPHONATES IMPORT ATP-BINDING PROTEIN PHNC"/>
    <property type="match status" value="1"/>
</dbReference>
<dbReference type="Pfam" id="PF00005">
    <property type="entry name" value="ABC_tran"/>
    <property type="match status" value="1"/>
</dbReference>
<dbReference type="PIRSF" id="PIRSF039085">
    <property type="entry name" value="ABC_ATPase_HisP"/>
    <property type="match status" value="1"/>
</dbReference>
<dbReference type="SMART" id="SM00382">
    <property type="entry name" value="AAA"/>
    <property type="match status" value="1"/>
</dbReference>
<dbReference type="SUPFAM" id="SSF52540">
    <property type="entry name" value="P-loop containing nucleoside triphosphate hydrolases"/>
    <property type="match status" value="1"/>
</dbReference>
<dbReference type="PROSITE" id="PS00211">
    <property type="entry name" value="ABC_TRANSPORTER_1"/>
    <property type="match status" value="1"/>
</dbReference>
<dbReference type="PROSITE" id="PS50893">
    <property type="entry name" value="ABC_TRANSPORTER_2"/>
    <property type="match status" value="1"/>
</dbReference>
<reference key="1">
    <citation type="journal article" date="1996" name="Mol. Microbiol.">
        <title>The general L-amino acid permease of Rhizobium leguminosarum is an ABC uptake system that also influences efflux of solutes.</title>
        <authorList>
            <person name="Walshaw D.L."/>
            <person name="Poole P.S."/>
        </authorList>
    </citation>
    <scope>NUCLEOTIDE SEQUENCE [GENOMIC DNA]</scope>
</reference>
<reference key="2">
    <citation type="journal article" date="2006" name="Genome Biol.">
        <title>The genome of Rhizobium leguminosarum has recognizable core and accessory components.</title>
        <authorList>
            <person name="Young J.P.W."/>
            <person name="Crossman L.C."/>
            <person name="Johnston A.W.B."/>
            <person name="Thomson N.R."/>
            <person name="Ghazoui Z.F."/>
            <person name="Hull K.H."/>
            <person name="Wexler M."/>
            <person name="Curson A.R.J."/>
            <person name="Todd J.D."/>
            <person name="Poole P.S."/>
            <person name="Mauchline T.H."/>
            <person name="East A.K."/>
            <person name="Quail M.A."/>
            <person name="Churcher C."/>
            <person name="Arrowsmith C."/>
            <person name="Cherevach I."/>
            <person name="Chillingworth T."/>
            <person name="Clarke K."/>
            <person name="Cronin A."/>
            <person name="Davis P."/>
            <person name="Fraser A."/>
            <person name="Hance Z."/>
            <person name="Hauser H."/>
            <person name="Jagels K."/>
            <person name="Moule S."/>
            <person name="Mungall K."/>
            <person name="Norbertczak H."/>
            <person name="Rabbinowitsch E."/>
            <person name="Sanders M."/>
            <person name="Simmonds M."/>
            <person name="Whitehead S."/>
            <person name="Parkhill J."/>
        </authorList>
    </citation>
    <scope>NUCLEOTIDE SEQUENCE [LARGE SCALE GENOMIC DNA]</scope>
    <source>
        <strain>DSM 114642 / LMG 32736 / 3841</strain>
    </source>
</reference>
<accession>Q52815</accession>
<accession>Q1MH74</accession>